<protein>
    <recommendedName>
        <fullName evidence="2">PHD finger protein 23</fullName>
    </recommendedName>
    <alternativeName>
        <fullName evidence="1">PDH-containing protein JUNE-1</fullName>
    </alternativeName>
</protein>
<keyword id="KW-0007">Acetylation</keyword>
<keyword id="KW-0072">Autophagy</keyword>
<keyword id="KW-0963">Cytoplasm</keyword>
<keyword id="KW-0479">Metal-binding</keyword>
<keyword id="KW-0539">Nucleus</keyword>
<keyword id="KW-0597">Phosphoprotein</keyword>
<keyword id="KW-1185">Reference proteome</keyword>
<keyword id="KW-0833">Ubl conjugation pathway</keyword>
<keyword id="KW-0862">Zinc</keyword>
<keyword id="KW-0863">Zinc-finger</keyword>
<organism>
    <name type="scientific">Bos taurus</name>
    <name type="common">Bovine</name>
    <dbReference type="NCBI Taxonomy" id="9913"/>
    <lineage>
        <taxon>Eukaryota</taxon>
        <taxon>Metazoa</taxon>
        <taxon>Chordata</taxon>
        <taxon>Craniata</taxon>
        <taxon>Vertebrata</taxon>
        <taxon>Euteleostomi</taxon>
        <taxon>Mammalia</taxon>
        <taxon>Eutheria</taxon>
        <taxon>Laurasiatheria</taxon>
        <taxon>Artiodactyla</taxon>
        <taxon>Ruminantia</taxon>
        <taxon>Pecora</taxon>
        <taxon>Bovidae</taxon>
        <taxon>Bovinae</taxon>
        <taxon>Bos</taxon>
    </lineage>
</organism>
<proteinExistence type="evidence at transcript level"/>
<feature type="chain" id="PRO_0000302829" description="PHD finger protein 23">
    <location>
        <begin position="1"/>
        <end position="400"/>
    </location>
</feature>
<feature type="zinc finger region" description="PHD-type">
    <location>
        <begin position="336"/>
        <end position="384"/>
    </location>
</feature>
<feature type="region of interest" description="Disordered" evidence="3">
    <location>
        <begin position="1"/>
        <end position="30"/>
    </location>
</feature>
<feature type="region of interest" description="Disordered" evidence="3">
    <location>
        <begin position="50"/>
        <end position="126"/>
    </location>
</feature>
<feature type="region of interest" description="Disordered" evidence="3">
    <location>
        <begin position="139"/>
        <end position="318"/>
    </location>
</feature>
<feature type="compositionally biased region" description="Basic residues" evidence="3">
    <location>
        <begin position="92"/>
        <end position="101"/>
    </location>
</feature>
<feature type="compositionally biased region" description="Basic residues" evidence="3">
    <location>
        <begin position="178"/>
        <end position="187"/>
    </location>
</feature>
<feature type="compositionally biased region" description="Basic residues" evidence="3">
    <location>
        <begin position="213"/>
        <end position="225"/>
    </location>
</feature>
<feature type="compositionally biased region" description="Pro residues" evidence="3">
    <location>
        <begin position="232"/>
        <end position="241"/>
    </location>
</feature>
<feature type="compositionally biased region" description="Acidic residues" evidence="3">
    <location>
        <begin position="245"/>
        <end position="260"/>
    </location>
</feature>
<feature type="compositionally biased region" description="Pro residues" evidence="3">
    <location>
        <begin position="271"/>
        <end position="284"/>
    </location>
</feature>
<feature type="compositionally biased region" description="Polar residues" evidence="3">
    <location>
        <begin position="302"/>
        <end position="315"/>
    </location>
</feature>
<feature type="modified residue" description="N-acetylmethionine" evidence="2">
    <location>
        <position position="1"/>
    </location>
</feature>
<feature type="modified residue" description="Phosphoserine" evidence="2">
    <location>
        <position position="124"/>
    </location>
</feature>
<feature type="modified residue" description="Phosphoserine" evidence="2">
    <location>
        <position position="147"/>
    </location>
</feature>
<feature type="modified residue" description="Phosphoserine" evidence="2">
    <location>
        <position position="150"/>
    </location>
</feature>
<feature type="modified residue" description="Phosphothreonine" evidence="2">
    <location>
        <position position="165"/>
    </location>
</feature>
<feature type="modified residue" description="Phosphoserine" evidence="2">
    <location>
        <position position="312"/>
    </location>
</feature>
<feature type="modified residue" description="Phosphoserine" evidence="2">
    <location>
        <position position="313"/>
    </location>
</feature>
<feature type="modified residue" description="Phosphoserine" evidence="2">
    <location>
        <position position="314"/>
    </location>
</feature>
<feature type="modified residue" description="Phosphoserine" evidence="2">
    <location>
        <position position="397"/>
    </location>
</feature>
<feature type="sequence conflict" description="In Ref. 1; AAX46696." evidence="4" ref="1">
    <location>
        <begin position="248"/>
        <end position="250"/>
    </location>
</feature>
<name>PHF23_BOVIN</name>
<evidence type="ECO:0000250" key="1">
    <source>
        <dbReference type="UniProtKB" id="Q8BSN5"/>
    </source>
</evidence>
<evidence type="ECO:0000250" key="2">
    <source>
        <dbReference type="UniProtKB" id="Q9BUL5"/>
    </source>
</evidence>
<evidence type="ECO:0000256" key="3">
    <source>
        <dbReference type="SAM" id="MobiDB-lite"/>
    </source>
</evidence>
<evidence type="ECO:0000305" key="4"/>
<reference key="1">
    <citation type="journal article" date="2005" name="BMC Genomics">
        <title>Characterization of 954 bovine full-CDS cDNA sequences.</title>
        <authorList>
            <person name="Harhay G.P."/>
            <person name="Sonstegard T.S."/>
            <person name="Keele J.W."/>
            <person name="Heaton M.P."/>
            <person name="Clawson M.L."/>
            <person name="Snelling W.M."/>
            <person name="Wiedmann R.T."/>
            <person name="Van Tassell C.P."/>
            <person name="Smith T.P.L."/>
        </authorList>
    </citation>
    <scope>NUCLEOTIDE SEQUENCE [LARGE SCALE MRNA]</scope>
</reference>
<reference key="2">
    <citation type="submission" date="2007-06" db="EMBL/GenBank/DDBJ databases">
        <authorList>
            <consortium name="NIH - Mammalian Gene Collection (MGC) project"/>
        </authorList>
    </citation>
    <scope>NUCLEOTIDE SEQUENCE [LARGE SCALE MRNA]</scope>
    <source>
        <strain>Hereford</strain>
        <tissue>Basal ganglia</tissue>
    </source>
</reference>
<comment type="function">
    <text evidence="2">Acts as a negative regulator of autophagy, through promoting ubiquitination and degradation of LRSAM1, an E3 ubiquitin ligase that promotes autophagy in response to starvation or infecting bacteria.</text>
</comment>
<comment type="subunit">
    <text evidence="2">Interacts with LRSAM1.</text>
</comment>
<comment type="subcellular location">
    <subcellularLocation>
        <location evidence="2">Nucleus</location>
    </subcellularLocation>
    <subcellularLocation>
        <location evidence="2">Cytoplasm</location>
    </subcellularLocation>
    <text evidence="2">Mainly present in the nucleus and part in the cytoplasm.</text>
</comment>
<comment type="domain">
    <text evidence="2">The PHD-type zinc-finger domain is required for interaction with LRSAM1 and negative regulation of autophagy.</text>
</comment>
<comment type="similarity">
    <text evidence="4">Belongs to the PHF23 family.</text>
</comment>
<accession>A5D962</accession>
<accession>Q58CU8</accession>
<gene>
    <name evidence="2" type="primary">PHF23</name>
</gene>
<dbReference type="EMBL" id="BT021849">
    <property type="protein sequence ID" value="AAX46696.1"/>
    <property type="molecule type" value="mRNA"/>
</dbReference>
<dbReference type="EMBL" id="BT030481">
    <property type="protein sequence ID" value="ABQ12921.1"/>
    <property type="molecule type" value="mRNA"/>
</dbReference>
<dbReference type="EMBL" id="BC142215">
    <property type="protein sequence ID" value="AAI42216.1"/>
    <property type="molecule type" value="mRNA"/>
</dbReference>
<dbReference type="RefSeq" id="NP_001019741.1">
    <property type="nucleotide sequence ID" value="NM_001024570.1"/>
</dbReference>
<dbReference type="FunCoup" id="A5D962">
    <property type="interactions" value="3241"/>
</dbReference>
<dbReference type="STRING" id="9913.ENSBTAP00000019811"/>
<dbReference type="PaxDb" id="9913-ENSBTAP00000019811"/>
<dbReference type="Ensembl" id="ENSBTAT00000019811.7">
    <property type="protein sequence ID" value="ENSBTAP00000019811.6"/>
    <property type="gene ID" value="ENSBTAG00000014881.7"/>
</dbReference>
<dbReference type="GeneID" id="539774"/>
<dbReference type="KEGG" id="bta:539774"/>
<dbReference type="CTD" id="79142"/>
<dbReference type="VEuPathDB" id="HostDB:ENSBTAG00000014881"/>
<dbReference type="VGNC" id="VGNC:32823">
    <property type="gene designation" value="PHF23"/>
</dbReference>
<dbReference type="eggNOG" id="KOG1844">
    <property type="taxonomic scope" value="Eukaryota"/>
</dbReference>
<dbReference type="GeneTree" id="ENSGT00530000063882"/>
<dbReference type="InParanoid" id="A5D962"/>
<dbReference type="OMA" id="CRDMRRS"/>
<dbReference type="OrthoDB" id="79252at2759"/>
<dbReference type="Proteomes" id="UP000009136">
    <property type="component" value="Chromosome 19"/>
</dbReference>
<dbReference type="Bgee" id="ENSBTAG00000014881">
    <property type="expression patterns" value="Expressed in semen and 108 other cell types or tissues"/>
</dbReference>
<dbReference type="GO" id="GO:0005829">
    <property type="term" value="C:cytosol"/>
    <property type="evidence" value="ECO:0007669"/>
    <property type="project" value="Ensembl"/>
</dbReference>
<dbReference type="GO" id="GO:0005654">
    <property type="term" value="C:nucleoplasm"/>
    <property type="evidence" value="ECO:0007669"/>
    <property type="project" value="Ensembl"/>
</dbReference>
<dbReference type="GO" id="GO:0005634">
    <property type="term" value="C:nucleus"/>
    <property type="evidence" value="ECO:0000318"/>
    <property type="project" value="GO_Central"/>
</dbReference>
<dbReference type="GO" id="GO:0008270">
    <property type="term" value="F:zinc ion binding"/>
    <property type="evidence" value="ECO:0007669"/>
    <property type="project" value="UniProtKB-KW"/>
</dbReference>
<dbReference type="GO" id="GO:0006914">
    <property type="term" value="P:autophagy"/>
    <property type="evidence" value="ECO:0007669"/>
    <property type="project" value="UniProtKB-KW"/>
</dbReference>
<dbReference type="GO" id="GO:1902902">
    <property type="term" value="P:negative regulation of autophagosome assembly"/>
    <property type="evidence" value="ECO:0000250"/>
    <property type="project" value="GO_Central"/>
</dbReference>
<dbReference type="GO" id="GO:1901097">
    <property type="term" value="P:negative regulation of autophagosome maturation"/>
    <property type="evidence" value="ECO:0000250"/>
    <property type="project" value="GO_Central"/>
</dbReference>
<dbReference type="GO" id="GO:0031398">
    <property type="term" value="P:positive regulation of protein ubiquitination"/>
    <property type="evidence" value="ECO:0000250"/>
    <property type="project" value="GO_Central"/>
</dbReference>
<dbReference type="CDD" id="cd15631">
    <property type="entry name" value="PHD_PHF23"/>
    <property type="match status" value="1"/>
</dbReference>
<dbReference type="Gene3D" id="3.30.40.10">
    <property type="entry name" value="Zinc/RING finger domain, C3HC4 (zinc finger)"/>
    <property type="match status" value="1"/>
</dbReference>
<dbReference type="InterPro" id="IPR011011">
    <property type="entry name" value="Znf_FYVE_PHD"/>
</dbReference>
<dbReference type="InterPro" id="IPR001965">
    <property type="entry name" value="Znf_PHD"/>
</dbReference>
<dbReference type="InterPro" id="IPR019787">
    <property type="entry name" value="Znf_PHD-finger"/>
</dbReference>
<dbReference type="InterPro" id="IPR013083">
    <property type="entry name" value="Znf_RING/FYVE/PHD"/>
</dbReference>
<dbReference type="PANTHER" id="PTHR14571">
    <property type="entry name" value="HISTONE-LYSINE N-METHYLTRANSFERASE SET-26-RELATED"/>
    <property type="match status" value="1"/>
</dbReference>
<dbReference type="PANTHER" id="PTHR14571:SF8">
    <property type="entry name" value="PHD FINGER PROTEIN 23"/>
    <property type="match status" value="1"/>
</dbReference>
<dbReference type="Pfam" id="PF13831">
    <property type="entry name" value="PHD_2"/>
    <property type="match status" value="1"/>
</dbReference>
<dbReference type="SMART" id="SM00249">
    <property type="entry name" value="PHD"/>
    <property type="match status" value="1"/>
</dbReference>
<dbReference type="SUPFAM" id="SSF57903">
    <property type="entry name" value="FYVE/PHD zinc finger"/>
    <property type="match status" value="1"/>
</dbReference>
<sequence length="400" mass="43440">MLEAMAEPSPEDPPPTLKPETQPPEKRRRTIEDFNKFCSFVLAYAGYIPPSKEESDWPASGSSSPLRGESAADSDGWDSAPSDLRTIQTFVKKAKSSKRRAAQAGPTQPGPPRSTFPRLQAPDSATLLEKMKLKDSLFDIDGPKMASPLSPTSLTHASRPPAALTPVPLSQGDLSQPPRKKDRKNRKLGPGGATGFGVLRRPRPAPGDGEKRSRIKKSKKRKLKKAERGDRLPPPGPPRAPPSDTDSEEEEEEEEEEEEMAAMVGGEAPAPVLPTPEAPRPPATVHPEGAPPTDGESKEVGSTETSQDGDASSSEGEMRVMDEDIMVESGDDSWDLITCYCRKPFAGRPMIECSLCGTWIHLSCAKIKKTNVPDFFYCQKCKELRPEARRLGGPPKSGEP</sequence>